<keyword id="KW-0238">DNA-binding</keyword>
<keyword id="KW-0678">Repressor</keyword>
<keyword id="KW-0804">Transcription</keyword>
<keyword id="KW-0805">Transcription regulation</keyword>
<evidence type="ECO:0000250" key="1"/>
<evidence type="ECO:0000255" key="2">
    <source>
        <dbReference type="HAMAP-Rule" id="MF_00768"/>
    </source>
</evidence>
<gene>
    <name evidence="2" type="primary">betI</name>
    <name type="ordered locus">PA14_70970</name>
</gene>
<name>BETI_PSEAB</name>
<feature type="chain" id="PRO_1000083566" description="HTH-type transcriptional regulator BetI">
    <location>
        <begin position="1"/>
        <end position="197"/>
    </location>
</feature>
<feature type="domain" description="HTH tetR-type" evidence="2">
    <location>
        <begin position="8"/>
        <end position="68"/>
    </location>
</feature>
<feature type="DNA-binding region" description="H-T-H motif" evidence="2">
    <location>
        <begin position="31"/>
        <end position="50"/>
    </location>
</feature>
<organism>
    <name type="scientific">Pseudomonas aeruginosa (strain UCBPP-PA14)</name>
    <dbReference type="NCBI Taxonomy" id="208963"/>
    <lineage>
        <taxon>Bacteria</taxon>
        <taxon>Pseudomonadati</taxon>
        <taxon>Pseudomonadota</taxon>
        <taxon>Gammaproteobacteria</taxon>
        <taxon>Pseudomonadales</taxon>
        <taxon>Pseudomonadaceae</taxon>
        <taxon>Pseudomonas</taxon>
    </lineage>
</organism>
<sequence>MPKVGMQPIRRSQLIHATLEAVDQVGMGDASIALIARLAGVSNGIISHYFQDKNGLLEATMRHLLSALSKAVRERRAALYDDSPRAHLRAIVEGNFDDSQVNGPAMKTWLAFWATSMHQPALRRLQRVNDHRLYSNLCYQFRRQLSADDARAAARGLAALIDGLWLRGALTGDAFDTDEALNIAYDYLDQQLAKQSG</sequence>
<proteinExistence type="inferred from homology"/>
<protein>
    <recommendedName>
        <fullName evidence="2">HTH-type transcriptional regulator BetI</fullName>
    </recommendedName>
</protein>
<accession>Q02DY8</accession>
<dbReference type="EMBL" id="CP000438">
    <property type="protein sequence ID" value="ABJ14757.1"/>
    <property type="molecule type" value="Genomic_DNA"/>
</dbReference>
<dbReference type="RefSeq" id="WP_003096684.1">
    <property type="nucleotide sequence ID" value="NZ_CP034244.1"/>
</dbReference>
<dbReference type="SMR" id="Q02DY8"/>
<dbReference type="GeneID" id="77223910"/>
<dbReference type="KEGG" id="pau:PA14_70970"/>
<dbReference type="PseudoCAP" id="PA14_70970"/>
<dbReference type="HOGENOM" id="CLU_069356_15_4_6"/>
<dbReference type="BioCyc" id="PAER208963:G1G74-5973-MONOMER"/>
<dbReference type="UniPathway" id="UPA00529"/>
<dbReference type="Proteomes" id="UP000000653">
    <property type="component" value="Chromosome"/>
</dbReference>
<dbReference type="GO" id="GO:0003700">
    <property type="term" value="F:DNA-binding transcription factor activity"/>
    <property type="evidence" value="ECO:0007669"/>
    <property type="project" value="UniProtKB-UniRule"/>
</dbReference>
<dbReference type="GO" id="GO:0000976">
    <property type="term" value="F:transcription cis-regulatory region binding"/>
    <property type="evidence" value="ECO:0007669"/>
    <property type="project" value="TreeGrafter"/>
</dbReference>
<dbReference type="GO" id="GO:0019285">
    <property type="term" value="P:glycine betaine biosynthetic process from choline"/>
    <property type="evidence" value="ECO:0007669"/>
    <property type="project" value="UniProtKB-UniRule"/>
</dbReference>
<dbReference type="GO" id="GO:0045892">
    <property type="term" value="P:negative regulation of DNA-templated transcription"/>
    <property type="evidence" value="ECO:0007669"/>
    <property type="project" value="UniProtKB-UniRule"/>
</dbReference>
<dbReference type="Gene3D" id="1.10.357.10">
    <property type="entry name" value="Tetracycline Repressor, domain 2"/>
    <property type="match status" value="1"/>
</dbReference>
<dbReference type="HAMAP" id="MF_00768">
    <property type="entry name" value="HTH_type_BetI"/>
    <property type="match status" value="1"/>
</dbReference>
<dbReference type="InterPro" id="IPR039538">
    <property type="entry name" value="BetI_C"/>
</dbReference>
<dbReference type="InterPro" id="IPR023772">
    <property type="entry name" value="DNA-bd_HTH_TetR-type_CS"/>
</dbReference>
<dbReference type="InterPro" id="IPR009057">
    <property type="entry name" value="Homeodomain-like_sf"/>
</dbReference>
<dbReference type="InterPro" id="IPR050109">
    <property type="entry name" value="HTH-type_TetR-like_transc_reg"/>
</dbReference>
<dbReference type="InterPro" id="IPR001647">
    <property type="entry name" value="HTH_TetR"/>
</dbReference>
<dbReference type="InterPro" id="IPR036271">
    <property type="entry name" value="Tet_transcr_reg_TetR-rel_C_sf"/>
</dbReference>
<dbReference type="InterPro" id="IPR017757">
    <property type="entry name" value="Tscrpt_rep_BetI"/>
</dbReference>
<dbReference type="NCBIfam" id="TIGR03384">
    <property type="entry name" value="betaine_BetI"/>
    <property type="match status" value="1"/>
</dbReference>
<dbReference type="NCBIfam" id="NF001978">
    <property type="entry name" value="PRK00767.1"/>
    <property type="match status" value="1"/>
</dbReference>
<dbReference type="PANTHER" id="PTHR30055:SF234">
    <property type="entry name" value="HTH-TYPE TRANSCRIPTIONAL REGULATOR BETI"/>
    <property type="match status" value="1"/>
</dbReference>
<dbReference type="PANTHER" id="PTHR30055">
    <property type="entry name" value="HTH-TYPE TRANSCRIPTIONAL REGULATOR RUTR"/>
    <property type="match status" value="1"/>
</dbReference>
<dbReference type="Pfam" id="PF13977">
    <property type="entry name" value="TetR_C_6"/>
    <property type="match status" value="1"/>
</dbReference>
<dbReference type="Pfam" id="PF00440">
    <property type="entry name" value="TetR_N"/>
    <property type="match status" value="1"/>
</dbReference>
<dbReference type="SUPFAM" id="SSF46689">
    <property type="entry name" value="Homeodomain-like"/>
    <property type="match status" value="1"/>
</dbReference>
<dbReference type="SUPFAM" id="SSF48498">
    <property type="entry name" value="Tetracyclin repressor-like, C-terminal domain"/>
    <property type="match status" value="1"/>
</dbReference>
<dbReference type="PROSITE" id="PS01081">
    <property type="entry name" value="HTH_TETR_1"/>
    <property type="match status" value="1"/>
</dbReference>
<dbReference type="PROSITE" id="PS50977">
    <property type="entry name" value="HTH_TETR_2"/>
    <property type="match status" value="1"/>
</dbReference>
<reference key="1">
    <citation type="journal article" date="2006" name="Genome Biol.">
        <title>Genomic analysis reveals that Pseudomonas aeruginosa virulence is combinatorial.</title>
        <authorList>
            <person name="Lee D.G."/>
            <person name="Urbach J.M."/>
            <person name="Wu G."/>
            <person name="Liberati N.T."/>
            <person name="Feinbaum R.L."/>
            <person name="Miyata S."/>
            <person name="Diggins L.T."/>
            <person name="He J."/>
            <person name="Saucier M."/>
            <person name="Deziel E."/>
            <person name="Friedman L."/>
            <person name="Li L."/>
            <person name="Grills G."/>
            <person name="Montgomery K."/>
            <person name="Kucherlapati R."/>
            <person name="Rahme L.G."/>
            <person name="Ausubel F.M."/>
        </authorList>
    </citation>
    <scope>NUCLEOTIDE SEQUENCE [LARGE SCALE GENOMIC DNA]</scope>
    <source>
        <strain>UCBPP-PA14</strain>
    </source>
</reference>
<comment type="function">
    <text evidence="1">Repressor involved in the biosynthesis of the osmoprotectant glycine betaine. It represses transcription of the choline transporter BetT and the genes of BetAB involved in the synthesis of glycine betaine (By similarity).</text>
</comment>
<comment type="pathway">
    <text>Amine and polyamine biosynthesis; betaine biosynthesis via choline pathway [regulation].</text>
</comment>